<dbReference type="EC" id="3.5.1.5" evidence="1"/>
<dbReference type="EMBL" id="CP000058">
    <property type="protein sequence ID" value="AAZ36124.1"/>
    <property type="molecule type" value="Genomic_DNA"/>
</dbReference>
<dbReference type="RefSeq" id="WP_002555404.1">
    <property type="nucleotide sequence ID" value="NC_005773.3"/>
</dbReference>
<dbReference type="SMR" id="Q48DE6"/>
<dbReference type="MEROPS" id="M38.982"/>
<dbReference type="KEGG" id="psp:PSPPH_4479"/>
<dbReference type="eggNOG" id="COG0804">
    <property type="taxonomic scope" value="Bacteria"/>
</dbReference>
<dbReference type="HOGENOM" id="CLU_000980_0_0_6"/>
<dbReference type="UniPathway" id="UPA00258">
    <property type="reaction ID" value="UER00370"/>
</dbReference>
<dbReference type="Proteomes" id="UP000000551">
    <property type="component" value="Chromosome"/>
</dbReference>
<dbReference type="GO" id="GO:0005737">
    <property type="term" value="C:cytoplasm"/>
    <property type="evidence" value="ECO:0007669"/>
    <property type="project" value="UniProtKB-SubCell"/>
</dbReference>
<dbReference type="GO" id="GO:0016151">
    <property type="term" value="F:nickel cation binding"/>
    <property type="evidence" value="ECO:0007669"/>
    <property type="project" value="UniProtKB-UniRule"/>
</dbReference>
<dbReference type="GO" id="GO:0009039">
    <property type="term" value="F:urease activity"/>
    <property type="evidence" value="ECO:0007669"/>
    <property type="project" value="UniProtKB-UniRule"/>
</dbReference>
<dbReference type="GO" id="GO:0043419">
    <property type="term" value="P:urea catabolic process"/>
    <property type="evidence" value="ECO:0007669"/>
    <property type="project" value="UniProtKB-UniRule"/>
</dbReference>
<dbReference type="CDD" id="cd00375">
    <property type="entry name" value="Urease_alpha"/>
    <property type="match status" value="1"/>
</dbReference>
<dbReference type="Gene3D" id="3.20.20.140">
    <property type="entry name" value="Metal-dependent hydrolases"/>
    <property type="match status" value="1"/>
</dbReference>
<dbReference type="Gene3D" id="2.30.40.10">
    <property type="entry name" value="Urease, subunit C, domain 1"/>
    <property type="match status" value="1"/>
</dbReference>
<dbReference type="HAMAP" id="MF_01953">
    <property type="entry name" value="Urease_alpha"/>
    <property type="match status" value="1"/>
</dbReference>
<dbReference type="InterPro" id="IPR006680">
    <property type="entry name" value="Amidohydro-rel"/>
</dbReference>
<dbReference type="InterPro" id="IPR011059">
    <property type="entry name" value="Metal-dep_hydrolase_composite"/>
</dbReference>
<dbReference type="InterPro" id="IPR032466">
    <property type="entry name" value="Metal_Hydrolase"/>
</dbReference>
<dbReference type="InterPro" id="IPR011612">
    <property type="entry name" value="Urease_alpha_N_dom"/>
</dbReference>
<dbReference type="InterPro" id="IPR050112">
    <property type="entry name" value="Urease_alpha_subunit"/>
</dbReference>
<dbReference type="InterPro" id="IPR017950">
    <property type="entry name" value="Urease_AS"/>
</dbReference>
<dbReference type="InterPro" id="IPR005848">
    <property type="entry name" value="Urease_asu"/>
</dbReference>
<dbReference type="InterPro" id="IPR017951">
    <property type="entry name" value="Urease_asu_c"/>
</dbReference>
<dbReference type="InterPro" id="IPR029754">
    <property type="entry name" value="Urease_Ni-bd"/>
</dbReference>
<dbReference type="NCBIfam" id="NF009685">
    <property type="entry name" value="PRK13206.1"/>
    <property type="match status" value="1"/>
</dbReference>
<dbReference type="NCBIfam" id="NF009686">
    <property type="entry name" value="PRK13207.1"/>
    <property type="match status" value="1"/>
</dbReference>
<dbReference type="NCBIfam" id="TIGR01792">
    <property type="entry name" value="urease_alph"/>
    <property type="match status" value="1"/>
</dbReference>
<dbReference type="PANTHER" id="PTHR43440">
    <property type="entry name" value="UREASE"/>
    <property type="match status" value="1"/>
</dbReference>
<dbReference type="PANTHER" id="PTHR43440:SF1">
    <property type="entry name" value="UREASE"/>
    <property type="match status" value="1"/>
</dbReference>
<dbReference type="Pfam" id="PF01979">
    <property type="entry name" value="Amidohydro_1"/>
    <property type="match status" value="1"/>
</dbReference>
<dbReference type="Pfam" id="PF00449">
    <property type="entry name" value="Urease_alpha"/>
    <property type="match status" value="1"/>
</dbReference>
<dbReference type="PRINTS" id="PR01752">
    <property type="entry name" value="UREASE"/>
</dbReference>
<dbReference type="SUPFAM" id="SSF51338">
    <property type="entry name" value="Composite domain of metallo-dependent hydrolases"/>
    <property type="match status" value="1"/>
</dbReference>
<dbReference type="SUPFAM" id="SSF51556">
    <property type="entry name" value="Metallo-dependent hydrolases"/>
    <property type="match status" value="1"/>
</dbReference>
<dbReference type="PROSITE" id="PS01120">
    <property type="entry name" value="UREASE_1"/>
    <property type="match status" value="1"/>
</dbReference>
<dbReference type="PROSITE" id="PS00145">
    <property type="entry name" value="UREASE_2"/>
    <property type="match status" value="1"/>
</dbReference>
<dbReference type="PROSITE" id="PS51368">
    <property type="entry name" value="UREASE_3"/>
    <property type="match status" value="1"/>
</dbReference>
<gene>
    <name evidence="1" type="primary">ureC</name>
    <name type="ordered locus">PSPPH_4479</name>
</gene>
<sequence length="566" mass="60707">MKISRQAYADMFGPTVGDKVRLADTELWIEVEKDFTTYGEEVKFGGGKVIRDGMGQGQLMAADVVDTLITNALIIDHWGIVKADVGIKNGRIAAIGKAGNPDIQPDVTIAVGAATEVIAGEGMILTAGGVDTHIHFICPQQIEEALMSGVTTMIGGGTGPATGTNATTVTPGPWHMARMLQASDSFPMNIGFTGKGNVSLPGPLIEQVKAGAIGLKLHEDWGTTPAAIDNCLSVADEYDVQVAIHSDTLNESGFVETTLAAFKNRTIHTYHTEGAGGGHAPDIIKACGSPNVLPSSTNPTRPFTRNTIDEHLDMLMVCHHLDPSIAEDVAFAESRIRRETIAAEDILHDLGAFSMLSSDSQAMGRVGEVIMRTWQTADKMKKQRGPLPQDGPGNDNFRAKRYIAKYTINPAITHGISHEVGSIEVGKWADLVLWRPAFFGVKPTLILKGGAIAASLMGDANASIPTPQPVHYRPMFASYGSSLHATSLTFISQAAFDAGVPESLGLKKQIGVVKGCRTVQKKDLIHNDYLPDIEVDPQTYQVKADGVLLWCEPADVLPMAQRYFLF</sequence>
<accession>Q48DE6</accession>
<evidence type="ECO:0000255" key="1">
    <source>
        <dbReference type="HAMAP-Rule" id="MF_01953"/>
    </source>
</evidence>
<proteinExistence type="inferred from homology"/>
<keyword id="KW-0963">Cytoplasm</keyword>
<keyword id="KW-0378">Hydrolase</keyword>
<keyword id="KW-0479">Metal-binding</keyword>
<keyword id="KW-0533">Nickel</keyword>
<protein>
    <recommendedName>
        <fullName evidence="1">Urease subunit alpha</fullName>
        <ecNumber evidence="1">3.5.1.5</ecNumber>
    </recommendedName>
    <alternativeName>
        <fullName evidence="1">Urea amidohydrolase subunit alpha</fullName>
    </alternativeName>
</protein>
<name>URE1_PSE14</name>
<reference key="1">
    <citation type="journal article" date="2005" name="J. Bacteriol.">
        <title>Whole-genome sequence analysis of Pseudomonas syringae pv. phaseolicola 1448A reveals divergence among pathovars in genes involved in virulence and transposition.</title>
        <authorList>
            <person name="Joardar V."/>
            <person name="Lindeberg M."/>
            <person name="Jackson R.W."/>
            <person name="Selengut J."/>
            <person name="Dodson R."/>
            <person name="Brinkac L.M."/>
            <person name="Daugherty S.C."/>
            <person name="DeBoy R.T."/>
            <person name="Durkin A.S."/>
            <person name="Gwinn Giglio M."/>
            <person name="Madupu R."/>
            <person name="Nelson W.C."/>
            <person name="Rosovitz M.J."/>
            <person name="Sullivan S.A."/>
            <person name="Crabtree J."/>
            <person name="Creasy T."/>
            <person name="Davidsen T.M."/>
            <person name="Haft D.H."/>
            <person name="Zafar N."/>
            <person name="Zhou L."/>
            <person name="Halpin R."/>
            <person name="Holley T."/>
            <person name="Khouri H.M."/>
            <person name="Feldblyum T.V."/>
            <person name="White O."/>
            <person name="Fraser C.M."/>
            <person name="Chatterjee A.K."/>
            <person name="Cartinhour S."/>
            <person name="Schneider D."/>
            <person name="Mansfield J.W."/>
            <person name="Collmer A."/>
            <person name="Buell R."/>
        </authorList>
    </citation>
    <scope>NUCLEOTIDE SEQUENCE [LARGE SCALE GENOMIC DNA]</scope>
    <source>
        <strain>1448A / Race 6</strain>
    </source>
</reference>
<feature type="chain" id="PRO_0000234171" description="Urease subunit alpha">
    <location>
        <begin position="1"/>
        <end position="566"/>
    </location>
</feature>
<feature type="domain" description="Urease" evidence="1">
    <location>
        <begin position="128"/>
        <end position="566"/>
    </location>
</feature>
<feature type="active site" description="Proton donor" evidence="1">
    <location>
        <position position="319"/>
    </location>
</feature>
<feature type="binding site" evidence="1">
    <location>
        <position position="133"/>
    </location>
    <ligand>
        <name>Ni(2+)</name>
        <dbReference type="ChEBI" id="CHEBI:49786"/>
        <label>1</label>
    </ligand>
</feature>
<feature type="binding site" evidence="1">
    <location>
        <position position="135"/>
    </location>
    <ligand>
        <name>Ni(2+)</name>
        <dbReference type="ChEBI" id="CHEBI:49786"/>
        <label>1</label>
    </ligand>
</feature>
<feature type="binding site" description="via carbamate group" evidence="1">
    <location>
        <position position="216"/>
    </location>
    <ligand>
        <name>Ni(2+)</name>
        <dbReference type="ChEBI" id="CHEBI:49786"/>
        <label>1</label>
    </ligand>
</feature>
<feature type="binding site" description="via carbamate group" evidence="1">
    <location>
        <position position="216"/>
    </location>
    <ligand>
        <name>Ni(2+)</name>
        <dbReference type="ChEBI" id="CHEBI:49786"/>
        <label>2</label>
    </ligand>
</feature>
<feature type="binding site" evidence="1">
    <location>
        <position position="218"/>
    </location>
    <ligand>
        <name>substrate</name>
    </ligand>
</feature>
<feature type="binding site" evidence="1">
    <location>
        <position position="245"/>
    </location>
    <ligand>
        <name>Ni(2+)</name>
        <dbReference type="ChEBI" id="CHEBI:49786"/>
        <label>2</label>
    </ligand>
</feature>
<feature type="binding site" evidence="1">
    <location>
        <position position="271"/>
    </location>
    <ligand>
        <name>Ni(2+)</name>
        <dbReference type="ChEBI" id="CHEBI:49786"/>
        <label>2</label>
    </ligand>
</feature>
<feature type="binding site" evidence="1">
    <location>
        <position position="359"/>
    </location>
    <ligand>
        <name>Ni(2+)</name>
        <dbReference type="ChEBI" id="CHEBI:49786"/>
        <label>1</label>
    </ligand>
</feature>
<feature type="modified residue" description="N6-carboxylysine" evidence="1">
    <location>
        <position position="216"/>
    </location>
</feature>
<organism>
    <name type="scientific">Pseudomonas savastanoi pv. phaseolicola (strain 1448A / Race 6)</name>
    <name type="common">Pseudomonas syringae pv. phaseolicola (strain 1448A / Race 6)</name>
    <dbReference type="NCBI Taxonomy" id="264730"/>
    <lineage>
        <taxon>Bacteria</taxon>
        <taxon>Pseudomonadati</taxon>
        <taxon>Pseudomonadota</taxon>
        <taxon>Gammaproteobacteria</taxon>
        <taxon>Pseudomonadales</taxon>
        <taxon>Pseudomonadaceae</taxon>
        <taxon>Pseudomonas</taxon>
    </lineage>
</organism>
<comment type="catalytic activity">
    <reaction evidence="1">
        <text>urea + 2 H2O + H(+) = hydrogencarbonate + 2 NH4(+)</text>
        <dbReference type="Rhea" id="RHEA:20557"/>
        <dbReference type="ChEBI" id="CHEBI:15377"/>
        <dbReference type="ChEBI" id="CHEBI:15378"/>
        <dbReference type="ChEBI" id="CHEBI:16199"/>
        <dbReference type="ChEBI" id="CHEBI:17544"/>
        <dbReference type="ChEBI" id="CHEBI:28938"/>
        <dbReference type="EC" id="3.5.1.5"/>
    </reaction>
</comment>
<comment type="cofactor">
    <cofactor evidence="1">
        <name>Ni cation</name>
        <dbReference type="ChEBI" id="CHEBI:25516"/>
    </cofactor>
    <text evidence="1">Binds 2 nickel ions per subunit.</text>
</comment>
<comment type="pathway">
    <text evidence="1">Nitrogen metabolism; urea degradation; CO(2) and NH(3) from urea (urease route): step 1/1.</text>
</comment>
<comment type="subunit">
    <text evidence="1">May form a heterohexamer of 3 UreC (alpha) and 3 UreAB (gamma/beta) subunits. May also form a heterotrimer of UreA (gamma), UreB (beta) and UreC (alpha) subunits. Three heterotrimers associate to form the active enzyme.</text>
</comment>
<comment type="subcellular location">
    <subcellularLocation>
        <location evidence="1">Cytoplasm</location>
    </subcellularLocation>
</comment>
<comment type="PTM">
    <text evidence="1">Carboxylation allows a single lysine to coordinate two nickel ions.</text>
</comment>
<comment type="similarity">
    <text evidence="1">Belongs to the metallo-dependent hydrolases superfamily. Urease alpha subunit family.</text>
</comment>